<comment type="function">
    <text evidence="1">Catalyzes the formation of the alpha-1,6-glucosidic linkages in glycogen by scission of a 1,4-alpha-linked oligosaccharide from growing alpha-1,4-glucan chains and the subsequent attachment of the oligosaccharide to the alpha-1,6 position.</text>
</comment>
<comment type="catalytic activity">
    <reaction evidence="1">
        <text>Transfers a segment of a (1-&gt;4)-alpha-D-glucan chain to a primary hydroxy group in a similar glucan chain.</text>
        <dbReference type="EC" id="2.4.1.18"/>
    </reaction>
</comment>
<comment type="pathway">
    <text evidence="1">Glycan biosynthesis; glycogen biosynthesis.</text>
</comment>
<comment type="subunit">
    <text evidence="1">Monomer.</text>
</comment>
<comment type="similarity">
    <text evidence="1">Belongs to the glycosyl hydrolase 13 family. GlgB subfamily.</text>
</comment>
<accession>Q5NHN4</accession>
<evidence type="ECO:0000255" key="1">
    <source>
        <dbReference type="HAMAP-Rule" id="MF_00685"/>
    </source>
</evidence>
<protein>
    <recommendedName>
        <fullName evidence="1">1,4-alpha-glucan branching enzyme GlgB</fullName>
        <ecNumber evidence="1">2.4.1.18</ecNumber>
    </recommendedName>
    <alternativeName>
        <fullName evidence="1">1,4-alpha-D-glucan:1,4-alpha-D-glucan 6-glucosyl-transferase</fullName>
    </alternativeName>
    <alternativeName>
        <fullName evidence="1">Alpha-(1-&gt;4)-glucan branching enzyme</fullName>
    </alternativeName>
    <alternativeName>
        <fullName evidence="1">Glycogen branching enzyme</fullName>
        <shortName evidence="1">BE</shortName>
    </alternativeName>
</protein>
<reference key="1">
    <citation type="journal article" date="2005" name="Nat. Genet.">
        <title>The complete genome sequence of Francisella tularensis, the causative agent of tularemia.</title>
        <authorList>
            <person name="Larsson P."/>
            <person name="Oyston P.C.F."/>
            <person name="Chain P."/>
            <person name="Chu M.C."/>
            <person name="Duffield M."/>
            <person name="Fuxelius H.-H."/>
            <person name="Garcia E."/>
            <person name="Haelltorp G."/>
            <person name="Johansson D."/>
            <person name="Isherwood K.E."/>
            <person name="Karp P.D."/>
            <person name="Larsson E."/>
            <person name="Liu Y."/>
            <person name="Michell S."/>
            <person name="Prior J."/>
            <person name="Prior R."/>
            <person name="Malfatti S."/>
            <person name="Sjoestedt A."/>
            <person name="Svensson K."/>
            <person name="Thompson N."/>
            <person name="Vergez L."/>
            <person name="Wagg J.K."/>
            <person name="Wren B.W."/>
            <person name="Lindler L.E."/>
            <person name="Andersson S.G.E."/>
            <person name="Forsman M."/>
            <person name="Titball R.W."/>
        </authorList>
    </citation>
    <scope>NUCLEOTIDE SEQUENCE [LARGE SCALE GENOMIC DNA]</scope>
    <source>
        <strain>SCHU S4 / Schu 4</strain>
    </source>
</reference>
<proteinExistence type="inferred from homology"/>
<sequence length="640" mass="74805">MKNKNSEQNTHSTIGEQDIHYFHEGKHIYAYEFMGAHKACEEGIEGIRFTTWAPNAKSICVIGDFNYWQVEDKNYMEPITDAGLWSVFIPNAKNGDKYKFVVTNKDTNHYVYKSDPYAFFSELRPNTASIITTETQYTWSDDKWLEKRAKTNYYDNPMNVYELHLASWKTKNGKFLTYDELSETLPQYIKEMGYTHVEFMPLHEHPLDASWGYQPTGFYSVNSRHGDIIGLKRLVDKLHNNDIGVILDWVPGHFCKDQHGLIYFDGSPCYEYQEPTKAINKGWGTHNFDLGRNEVKCFLISNAMYWINEFHIDGLRVDAVSNILYLNYDREDGQWIPNIYGGHENLEGIAFLKELNGVLKHTCKGVITIAEESSSWPDISTPVEKGGLGFDFKWNMGWMNDTLRYISLDPVYRKYHHNLITFSMVYHYSEKFILSISHDEVVHGKKSLINKMWGDLWNKYAGLRLYMSYMIGHPGKKLIFMGSEFVQFVEWREYEQLQWQVVDQYESHKQTLHFFKKLNDFYHNETALWQCDYNHHGFRWIDADNSQQSILSFIRSSKDNKQKLIFICNFTPVTYYDYHLGVPDAGSYKEVFNSDNLEFGGSGQVMATEIFSSLQSSHGFEQRITIKIPPMATLVLKLIK</sequence>
<keyword id="KW-0119">Carbohydrate metabolism</keyword>
<keyword id="KW-0320">Glycogen biosynthesis</keyword>
<keyword id="KW-0321">Glycogen metabolism</keyword>
<keyword id="KW-0328">Glycosyltransferase</keyword>
<keyword id="KW-1185">Reference proteome</keyword>
<keyword id="KW-0808">Transferase</keyword>
<feature type="chain" id="PRO_0000188707" description="1,4-alpha-glucan branching enzyme GlgB">
    <location>
        <begin position="1"/>
        <end position="640"/>
    </location>
</feature>
<feature type="active site" description="Nucleophile" evidence="1">
    <location>
        <position position="318"/>
    </location>
</feature>
<feature type="active site" description="Proton donor" evidence="1">
    <location>
        <position position="371"/>
    </location>
</feature>
<dbReference type="EC" id="2.4.1.18" evidence="1"/>
<dbReference type="EMBL" id="AJ749949">
    <property type="protein sequence ID" value="CAG45046.1"/>
    <property type="molecule type" value="Genomic_DNA"/>
</dbReference>
<dbReference type="RefSeq" id="WP_003020147.1">
    <property type="nucleotide sequence ID" value="NC_006570.2"/>
</dbReference>
<dbReference type="RefSeq" id="YP_169458.1">
    <property type="nucleotide sequence ID" value="NC_006570.2"/>
</dbReference>
<dbReference type="SMR" id="Q5NHN4"/>
<dbReference type="IntAct" id="Q5NHN4">
    <property type="interactions" value="8"/>
</dbReference>
<dbReference type="STRING" id="177416.FTT_0413c"/>
<dbReference type="CAZy" id="CBM48">
    <property type="family name" value="Carbohydrate-Binding Module Family 48"/>
</dbReference>
<dbReference type="CAZy" id="GH13">
    <property type="family name" value="Glycoside Hydrolase Family 13"/>
</dbReference>
<dbReference type="DNASU" id="3190770"/>
<dbReference type="EnsemblBacteria" id="CAG45046">
    <property type="protein sequence ID" value="CAG45046"/>
    <property type="gene ID" value="FTT_0413c"/>
</dbReference>
<dbReference type="KEGG" id="ftu:FTT_0413c"/>
<dbReference type="eggNOG" id="COG0296">
    <property type="taxonomic scope" value="Bacteria"/>
</dbReference>
<dbReference type="OrthoDB" id="9800174at2"/>
<dbReference type="UniPathway" id="UPA00164"/>
<dbReference type="Proteomes" id="UP000001174">
    <property type="component" value="Chromosome"/>
</dbReference>
<dbReference type="GO" id="GO:0005829">
    <property type="term" value="C:cytosol"/>
    <property type="evidence" value="ECO:0007669"/>
    <property type="project" value="TreeGrafter"/>
</dbReference>
<dbReference type="GO" id="GO:0003844">
    <property type="term" value="F:1,4-alpha-glucan branching enzyme activity"/>
    <property type="evidence" value="ECO:0007669"/>
    <property type="project" value="UniProtKB-UniRule"/>
</dbReference>
<dbReference type="GO" id="GO:0043169">
    <property type="term" value="F:cation binding"/>
    <property type="evidence" value="ECO:0007669"/>
    <property type="project" value="InterPro"/>
</dbReference>
<dbReference type="GO" id="GO:0004553">
    <property type="term" value="F:hydrolase activity, hydrolyzing O-glycosyl compounds"/>
    <property type="evidence" value="ECO:0007669"/>
    <property type="project" value="InterPro"/>
</dbReference>
<dbReference type="GO" id="GO:0005978">
    <property type="term" value="P:glycogen biosynthetic process"/>
    <property type="evidence" value="ECO:0007669"/>
    <property type="project" value="UniProtKB-UniRule"/>
</dbReference>
<dbReference type="CDD" id="cd11322">
    <property type="entry name" value="AmyAc_Glg_BE"/>
    <property type="match status" value="1"/>
</dbReference>
<dbReference type="CDD" id="cd02855">
    <property type="entry name" value="E_set_GBE_prok_N"/>
    <property type="match status" value="1"/>
</dbReference>
<dbReference type="FunFam" id="2.60.40.1180:FF:000002">
    <property type="entry name" value="1,4-alpha-glucan branching enzyme GlgB"/>
    <property type="match status" value="1"/>
</dbReference>
<dbReference type="FunFam" id="3.20.20.80:FF:000003">
    <property type="entry name" value="1,4-alpha-glucan branching enzyme GlgB"/>
    <property type="match status" value="1"/>
</dbReference>
<dbReference type="Gene3D" id="3.20.20.80">
    <property type="entry name" value="Glycosidases"/>
    <property type="match status" value="1"/>
</dbReference>
<dbReference type="Gene3D" id="2.60.40.1180">
    <property type="entry name" value="Golgi alpha-mannosidase II"/>
    <property type="match status" value="1"/>
</dbReference>
<dbReference type="Gene3D" id="2.60.40.10">
    <property type="entry name" value="Immunoglobulins"/>
    <property type="match status" value="1"/>
</dbReference>
<dbReference type="HAMAP" id="MF_00685">
    <property type="entry name" value="GlgB"/>
    <property type="match status" value="1"/>
</dbReference>
<dbReference type="InterPro" id="IPR006048">
    <property type="entry name" value="A-amylase/branching_C"/>
</dbReference>
<dbReference type="InterPro" id="IPR037439">
    <property type="entry name" value="Branching_enzy"/>
</dbReference>
<dbReference type="InterPro" id="IPR006407">
    <property type="entry name" value="GlgB"/>
</dbReference>
<dbReference type="InterPro" id="IPR044143">
    <property type="entry name" value="GlgB_N_E_set_prok"/>
</dbReference>
<dbReference type="InterPro" id="IPR006047">
    <property type="entry name" value="Glyco_hydro_13_cat_dom"/>
</dbReference>
<dbReference type="InterPro" id="IPR004193">
    <property type="entry name" value="Glyco_hydro_13_N"/>
</dbReference>
<dbReference type="InterPro" id="IPR013780">
    <property type="entry name" value="Glyco_hydro_b"/>
</dbReference>
<dbReference type="InterPro" id="IPR017853">
    <property type="entry name" value="Glycoside_hydrolase_SF"/>
</dbReference>
<dbReference type="InterPro" id="IPR013783">
    <property type="entry name" value="Ig-like_fold"/>
</dbReference>
<dbReference type="InterPro" id="IPR014756">
    <property type="entry name" value="Ig_E-set"/>
</dbReference>
<dbReference type="NCBIfam" id="TIGR01515">
    <property type="entry name" value="branching_enzym"/>
    <property type="match status" value="1"/>
</dbReference>
<dbReference type="NCBIfam" id="NF003811">
    <property type="entry name" value="PRK05402.1"/>
    <property type="match status" value="1"/>
</dbReference>
<dbReference type="NCBIfam" id="NF008967">
    <property type="entry name" value="PRK12313.1"/>
    <property type="match status" value="1"/>
</dbReference>
<dbReference type="PANTHER" id="PTHR43651">
    <property type="entry name" value="1,4-ALPHA-GLUCAN-BRANCHING ENZYME"/>
    <property type="match status" value="1"/>
</dbReference>
<dbReference type="PANTHER" id="PTHR43651:SF3">
    <property type="entry name" value="1,4-ALPHA-GLUCAN-BRANCHING ENZYME"/>
    <property type="match status" value="1"/>
</dbReference>
<dbReference type="Pfam" id="PF00128">
    <property type="entry name" value="Alpha-amylase"/>
    <property type="match status" value="2"/>
</dbReference>
<dbReference type="Pfam" id="PF02806">
    <property type="entry name" value="Alpha-amylase_C"/>
    <property type="match status" value="1"/>
</dbReference>
<dbReference type="Pfam" id="PF02922">
    <property type="entry name" value="CBM_48"/>
    <property type="match status" value="1"/>
</dbReference>
<dbReference type="PIRSF" id="PIRSF000463">
    <property type="entry name" value="GlgB"/>
    <property type="match status" value="1"/>
</dbReference>
<dbReference type="SMART" id="SM00642">
    <property type="entry name" value="Aamy"/>
    <property type="match status" value="1"/>
</dbReference>
<dbReference type="SUPFAM" id="SSF51445">
    <property type="entry name" value="(Trans)glycosidases"/>
    <property type="match status" value="1"/>
</dbReference>
<dbReference type="SUPFAM" id="SSF81296">
    <property type="entry name" value="E set domains"/>
    <property type="match status" value="1"/>
</dbReference>
<dbReference type="SUPFAM" id="SSF51011">
    <property type="entry name" value="Glycosyl hydrolase domain"/>
    <property type="match status" value="1"/>
</dbReference>
<organism>
    <name type="scientific">Francisella tularensis subsp. tularensis (strain SCHU S4 / Schu 4)</name>
    <dbReference type="NCBI Taxonomy" id="177416"/>
    <lineage>
        <taxon>Bacteria</taxon>
        <taxon>Pseudomonadati</taxon>
        <taxon>Pseudomonadota</taxon>
        <taxon>Gammaproteobacteria</taxon>
        <taxon>Thiotrichales</taxon>
        <taxon>Francisellaceae</taxon>
        <taxon>Francisella</taxon>
    </lineage>
</organism>
<gene>
    <name evidence="1" type="primary">glgB</name>
    <name type="ordered locus">FTT_0413c</name>
</gene>
<name>GLGB_FRATT</name>